<feature type="chain" id="PRO_0000002147" description="Arginine biosynthesis bifunctional protein ArgJ alpha chain" evidence="1">
    <location>
        <begin position="1"/>
        <end position="192"/>
    </location>
</feature>
<feature type="chain" id="PRO_0000002148" description="Arginine biosynthesis bifunctional protein ArgJ beta chain" evidence="1">
    <location>
        <begin position="193"/>
        <end position="404"/>
    </location>
</feature>
<feature type="active site" description="Nucleophile" evidence="1">
    <location>
        <position position="193"/>
    </location>
</feature>
<feature type="binding site" evidence="1">
    <location>
        <position position="156"/>
    </location>
    <ligand>
        <name>substrate</name>
    </ligand>
</feature>
<feature type="binding site" evidence="1">
    <location>
        <position position="182"/>
    </location>
    <ligand>
        <name>substrate</name>
    </ligand>
</feature>
<feature type="binding site" evidence="1">
    <location>
        <position position="193"/>
    </location>
    <ligand>
        <name>substrate</name>
    </ligand>
</feature>
<feature type="binding site" evidence="1">
    <location>
        <position position="277"/>
    </location>
    <ligand>
        <name>substrate</name>
    </ligand>
</feature>
<feature type="binding site" evidence="1">
    <location>
        <position position="399"/>
    </location>
    <ligand>
        <name>substrate</name>
    </ligand>
</feature>
<feature type="binding site" evidence="1">
    <location>
        <position position="404"/>
    </location>
    <ligand>
        <name>substrate</name>
    </ligand>
</feature>
<feature type="site" description="Involved in the stabilization of negative charge on the oxyanion by the formation of the oxyanion hole" evidence="1">
    <location>
        <position position="119"/>
    </location>
</feature>
<feature type="site" description="Involved in the stabilization of negative charge on the oxyanion by the formation of the oxyanion hole" evidence="1">
    <location>
        <position position="120"/>
    </location>
</feature>
<feature type="site" description="Cleavage; by autolysis" evidence="1">
    <location>
        <begin position="192"/>
        <end position="193"/>
    </location>
</feature>
<proteinExistence type="inferred from homology"/>
<name>ARGJ_CHLTE</name>
<organism>
    <name type="scientific">Chlorobaculum tepidum (strain ATCC 49652 / DSM 12025 / NBRC 103806 / TLS)</name>
    <name type="common">Chlorobium tepidum</name>
    <dbReference type="NCBI Taxonomy" id="194439"/>
    <lineage>
        <taxon>Bacteria</taxon>
        <taxon>Pseudomonadati</taxon>
        <taxon>Chlorobiota</taxon>
        <taxon>Chlorobiia</taxon>
        <taxon>Chlorobiales</taxon>
        <taxon>Chlorobiaceae</taxon>
        <taxon>Chlorobaculum</taxon>
    </lineage>
</organism>
<comment type="function">
    <text evidence="1">Catalyzes two activities which are involved in the cyclic version of arginine biosynthesis: the synthesis of N-acetylglutamate from glutamate and acetyl-CoA as the acetyl donor, and of ornithine by transacetylation between N(2)-acetylornithine and glutamate.</text>
</comment>
<comment type="catalytic activity">
    <reaction evidence="1">
        <text>N(2)-acetyl-L-ornithine + L-glutamate = N-acetyl-L-glutamate + L-ornithine</text>
        <dbReference type="Rhea" id="RHEA:15349"/>
        <dbReference type="ChEBI" id="CHEBI:29985"/>
        <dbReference type="ChEBI" id="CHEBI:44337"/>
        <dbReference type="ChEBI" id="CHEBI:46911"/>
        <dbReference type="ChEBI" id="CHEBI:57805"/>
        <dbReference type="EC" id="2.3.1.35"/>
    </reaction>
</comment>
<comment type="catalytic activity">
    <reaction evidence="1">
        <text>L-glutamate + acetyl-CoA = N-acetyl-L-glutamate + CoA + H(+)</text>
        <dbReference type="Rhea" id="RHEA:24292"/>
        <dbReference type="ChEBI" id="CHEBI:15378"/>
        <dbReference type="ChEBI" id="CHEBI:29985"/>
        <dbReference type="ChEBI" id="CHEBI:44337"/>
        <dbReference type="ChEBI" id="CHEBI:57287"/>
        <dbReference type="ChEBI" id="CHEBI:57288"/>
        <dbReference type="EC" id="2.3.1.1"/>
    </reaction>
</comment>
<comment type="pathway">
    <text evidence="1">Amino-acid biosynthesis; L-arginine biosynthesis; L-ornithine and N-acetyl-L-glutamate from L-glutamate and N(2)-acetyl-L-ornithine (cyclic): step 1/1.</text>
</comment>
<comment type="pathway">
    <text evidence="1">Amino-acid biosynthesis; L-arginine biosynthesis; N(2)-acetyl-L-ornithine from L-glutamate: step 1/4.</text>
</comment>
<comment type="subunit">
    <text evidence="1">Heterotetramer of two alpha and two beta chains.</text>
</comment>
<comment type="subcellular location">
    <subcellularLocation>
        <location evidence="1">Cytoplasm</location>
    </subcellularLocation>
</comment>
<comment type="similarity">
    <text evidence="1">Belongs to the ArgJ family.</text>
</comment>
<sequence length="404" mass="41800">MRPVVADPASDAVFWPEGFTLAGINCGIKPTSKDLMLMLCDEPASTASVFTTNLCCAAPVELSKAALSASGGKMRAVICNSGNANAATGAAGMQNARLMAESTAQAFDLNAGEVLVASTGVIGQQLPVEKIAGAMPSLKATSGSTQWCDAAEAIMTTDTFPKAFGVDVKLSGGTARIAGIAKGSGMICPNMATMLAFLGTDATIEPALLQELLAAANAVSFNAITVDGDTSTNDMAAIMASGKGPEVLRGSDNARLFGEALRSVMTMLAQLIIVDGEGATKFVELRVTGAKSNEEARMAAMTVANSPLVKTAIHGEDANWGRIIAAAGRSGASFVQEELSVYFDDEPILKPGLDANFSEERAKEVMSKEEFTITLSLGKGAGRATVWTCDLSHGYIEINGSYRS</sequence>
<gene>
    <name evidence="1" type="primary">argJ</name>
    <name type="ordered locus">CT1110</name>
</gene>
<protein>
    <recommendedName>
        <fullName evidence="1">Arginine biosynthesis bifunctional protein ArgJ</fullName>
    </recommendedName>
    <domain>
        <recommendedName>
            <fullName evidence="1">Glutamate N-acetyltransferase</fullName>
            <ecNumber evidence="1">2.3.1.35</ecNumber>
        </recommendedName>
        <alternativeName>
            <fullName evidence="1">Ornithine acetyltransferase</fullName>
            <shortName evidence="1">OATase</shortName>
        </alternativeName>
        <alternativeName>
            <fullName evidence="1">Ornithine transacetylase</fullName>
        </alternativeName>
    </domain>
    <domain>
        <recommendedName>
            <fullName evidence="1">Amino-acid acetyltransferase</fullName>
            <ecNumber evidence="1">2.3.1.1</ecNumber>
        </recommendedName>
        <alternativeName>
            <fullName evidence="1">N-acetylglutamate synthase</fullName>
            <shortName evidence="1">AGSase</shortName>
        </alternativeName>
    </domain>
    <component>
        <recommendedName>
            <fullName evidence="1">Arginine biosynthesis bifunctional protein ArgJ alpha chain</fullName>
        </recommendedName>
    </component>
    <component>
        <recommendedName>
            <fullName evidence="1">Arginine biosynthesis bifunctional protein ArgJ beta chain</fullName>
        </recommendedName>
    </component>
</protein>
<evidence type="ECO:0000255" key="1">
    <source>
        <dbReference type="HAMAP-Rule" id="MF_01106"/>
    </source>
</evidence>
<keyword id="KW-0012">Acyltransferase</keyword>
<keyword id="KW-0028">Amino-acid biosynthesis</keyword>
<keyword id="KW-0055">Arginine biosynthesis</keyword>
<keyword id="KW-0068">Autocatalytic cleavage</keyword>
<keyword id="KW-0963">Cytoplasm</keyword>
<keyword id="KW-0511">Multifunctional enzyme</keyword>
<keyword id="KW-1185">Reference proteome</keyword>
<keyword id="KW-0808">Transferase</keyword>
<reference key="1">
    <citation type="journal article" date="2002" name="Proc. Natl. Acad. Sci. U.S.A.">
        <title>The complete genome sequence of Chlorobium tepidum TLS, a photosynthetic, anaerobic, green-sulfur bacterium.</title>
        <authorList>
            <person name="Eisen J.A."/>
            <person name="Nelson K.E."/>
            <person name="Paulsen I.T."/>
            <person name="Heidelberg J.F."/>
            <person name="Wu M."/>
            <person name="Dodson R.J."/>
            <person name="DeBoy R.T."/>
            <person name="Gwinn M.L."/>
            <person name="Nelson W.C."/>
            <person name="Haft D.H."/>
            <person name="Hickey E.K."/>
            <person name="Peterson J.D."/>
            <person name="Durkin A.S."/>
            <person name="Kolonay J.F."/>
            <person name="Yang F."/>
            <person name="Holt I.E."/>
            <person name="Umayam L.A."/>
            <person name="Mason T.M."/>
            <person name="Brenner M."/>
            <person name="Shea T.P."/>
            <person name="Parksey D.S."/>
            <person name="Nierman W.C."/>
            <person name="Feldblyum T.V."/>
            <person name="Hansen C.L."/>
            <person name="Craven M.B."/>
            <person name="Radune D."/>
            <person name="Vamathevan J.J."/>
            <person name="Khouri H.M."/>
            <person name="White O."/>
            <person name="Gruber T.M."/>
            <person name="Ketchum K.A."/>
            <person name="Venter J.C."/>
            <person name="Tettelin H."/>
            <person name="Bryant D.A."/>
            <person name="Fraser C.M."/>
        </authorList>
    </citation>
    <scope>NUCLEOTIDE SEQUENCE [LARGE SCALE GENOMIC DNA]</scope>
    <source>
        <strain>ATCC 49652 / DSM 12025 / NBRC 103806 / TLS</strain>
    </source>
</reference>
<dbReference type="EC" id="2.3.1.35" evidence="1"/>
<dbReference type="EC" id="2.3.1.1" evidence="1"/>
<dbReference type="EMBL" id="AE006470">
    <property type="protein sequence ID" value="AAM72343.1"/>
    <property type="molecule type" value="Genomic_DNA"/>
</dbReference>
<dbReference type="RefSeq" id="NP_662001.1">
    <property type="nucleotide sequence ID" value="NC_002932.3"/>
</dbReference>
<dbReference type="RefSeq" id="WP_010932788.1">
    <property type="nucleotide sequence ID" value="NC_002932.3"/>
</dbReference>
<dbReference type="SMR" id="P59611"/>
<dbReference type="STRING" id="194439.CT1110"/>
<dbReference type="MEROPS" id="T05.002"/>
<dbReference type="EnsemblBacteria" id="AAM72343">
    <property type="protein sequence ID" value="AAM72343"/>
    <property type="gene ID" value="CT1110"/>
</dbReference>
<dbReference type="KEGG" id="cte:CT1110"/>
<dbReference type="PATRIC" id="fig|194439.7.peg.1008"/>
<dbReference type="eggNOG" id="COG1364">
    <property type="taxonomic scope" value="Bacteria"/>
</dbReference>
<dbReference type="HOGENOM" id="CLU_027172_1_0_10"/>
<dbReference type="OrthoDB" id="9804242at2"/>
<dbReference type="UniPathway" id="UPA00068">
    <property type="reaction ID" value="UER00106"/>
</dbReference>
<dbReference type="UniPathway" id="UPA00068">
    <property type="reaction ID" value="UER00111"/>
</dbReference>
<dbReference type="Proteomes" id="UP000001007">
    <property type="component" value="Chromosome"/>
</dbReference>
<dbReference type="GO" id="GO:0005737">
    <property type="term" value="C:cytoplasm"/>
    <property type="evidence" value="ECO:0007669"/>
    <property type="project" value="UniProtKB-SubCell"/>
</dbReference>
<dbReference type="GO" id="GO:0004358">
    <property type="term" value="F:glutamate N-acetyltransferase activity"/>
    <property type="evidence" value="ECO:0007669"/>
    <property type="project" value="UniProtKB-UniRule"/>
</dbReference>
<dbReference type="GO" id="GO:0004042">
    <property type="term" value="F:L-glutamate N-acetyltransferase activity"/>
    <property type="evidence" value="ECO:0007669"/>
    <property type="project" value="UniProtKB-UniRule"/>
</dbReference>
<dbReference type="GO" id="GO:0006526">
    <property type="term" value="P:L-arginine biosynthetic process"/>
    <property type="evidence" value="ECO:0007669"/>
    <property type="project" value="UniProtKB-UniRule"/>
</dbReference>
<dbReference type="GO" id="GO:0006592">
    <property type="term" value="P:ornithine biosynthetic process"/>
    <property type="evidence" value="ECO:0007669"/>
    <property type="project" value="TreeGrafter"/>
</dbReference>
<dbReference type="CDD" id="cd02152">
    <property type="entry name" value="OAT"/>
    <property type="match status" value="1"/>
</dbReference>
<dbReference type="FunFam" id="3.10.20.340:FF:000001">
    <property type="entry name" value="Arginine biosynthesis bifunctional protein ArgJ, chloroplastic"/>
    <property type="match status" value="1"/>
</dbReference>
<dbReference type="FunFam" id="3.60.70.12:FF:000001">
    <property type="entry name" value="Arginine biosynthesis bifunctional protein ArgJ, chloroplastic"/>
    <property type="match status" value="1"/>
</dbReference>
<dbReference type="Gene3D" id="3.10.20.340">
    <property type="entry name" value="ArgJ beta chain, C-terminal domain"/>
    <property type="match status" value="1"/>
</dbReference>
<dbReference type="Gene3D" id="3.60.70.12">
    <property type="entry name" value="L-amino peptidase D-ALA esterase/amidase"/>
    <property type="match status" value="1"/>
</dbReference>
<dbReference type="HAMAP" id="MF_01106">
    <property type="entry name" value="ArgJ"/>
    <property type="match status" value="1"/>
</dbReference>
<dbReference type="InterPro" id="IPR002813">
    <property type="entry name" value="Arg_biosynth_ArgJ"/>
</dbReference>
<dbReference type="InterPro" id="IPR016117">
    <property type="entry name" value="ArgJ-like_dom_sf"/>
</dbReference>
<dbReference type="InterPro" id="IPR042195">
    <property type="entry name" value="ArgJ_beta_C"/>
</dbReference>
<dbReference type="NCBIfam" id="TIGR00120">
    <property type="entry name" value="ArgJ"/>
    <property type="match status" value="1"/>
</dbReference>
<dbReference type="NCBIfam" id="NF003802">
    <property type="entry name" value="PRK05388.1"/>
    <property type="match status" value="1"/>
</dbReference>
<dbReference type="PANTHER" id="PTHR23100">
    <property type="entry name" value="ARGININE BIOSYNTHESIS BIFUNCTIONAL PROTEIN ARGJ"/>
    <property type="match status" value="1"/>
</dbReference>
<dbReference type="PANTHER" id="PTHR23100:SF0">
    <property type="entry name" value="ARGININE BIOSYNTHESIS BIFUNCTIONAL PROTEIN ARGJ, MITOCHONDRIAL"/>
    <property type="match status" value="1"/>
</dbReference>
<dbReference type="Pfam" id="PF01960">
    <property type="entry name" value="ArgJ"/>
    <property type="match status" value="1"/>
</dbReference>
<dbReference type="SUPFAM" id="SSF56266">
    <property type="entry name" value="DmpA/ArgJ-like"/>
    <property type="match status" value="1"/>
</dbReference>
<accession>P59611</accession>